<gene>
    <name evidence="1" type="primary">kdsB</name>
    <name type="ordered locus">Shew185_2363</name>
</gene>
<name>KDSB_SHEB8</name>
<keyword id="KW-0963">Cytoplasm</keyword>
<keyword id="KW-0448">Lipopolysaccharide biosynthesis</keyword>
<keyword id="KW-0548">Nucleotidyltransferase</keyword>
<keyword id="KW-0808">Transferase</keyword>
<reference key="1">
    <citation type="submission" date="2007-07" db="EMBL/GenBank/DDBJ databases">
        <title>Complete sequence of chromosome of Shewanella baltica OS185.</title>
        <authorList>
            <consortium name="US DOE Joint Genome Institute"/>
            <person name="Copeland A."/>
            <person name="Lucas S."/>
            <person name="Lapidus A."/>
            <person name="Barry K."/>
            <person name="Glavina del Rio T."/>
            <person name="Dalin E."/>
            <person name="Tice H."/>
            <person name="Pitluck S."/>
            <person name="Sims D."/>
            <person name="Brettin T."/>
            <person name="Bruce D."/>
            <person name="Detter J.C."/>
            <person name="Han C."/>
            <person name="Schmutz J."/>
            <person name="Larimer F."/>
            <person name="Land M."/>
            <person name="Hauser L."/>
            <person name="Kyrpides N."/>
            <person name="Mikhailova N."/>
            <person name="Brettar I."/>
            <person name="Rodrigues J."/>
            <person name="Konstantinidis K."/>
            <person name="Tiedje J."/>
            <person name="Richardson P."/>
        </authorList>
    </citation>
    <scope>NUCLEOTIDE SEQUENCE [LARGE SCALE GENOMIC DNA]</scope>
    <source>
        <strain>OS185</strain>
    </source>
</reference>
<evidence type="ECO:0000255" key="1">
    <source>
        <dbReference type="HAMAP-Rule" id="MF_00057"/>
    </source>
</evidence>
<organism>
    <name type="scientific">Shewanella baltica (strain OS185)</name>
    <dbReference type="NCBI Taxonomy" id="402882"/>
    <lineage>
        <taxon>Bacteria</taxon>
        <taxon>Pseudomonadati</taxon>
        <taxon>Pseudomonadota</taxon>
        <taxon>Gammaproteobacteria</taxon>
        <taxon>Alteromonadales</taxon>
        <taxon>Shewanellaceae</taxon>
        <taxon>Shewanella</taxon>
    </lineage>
</organism>
<feature type="chain" id="PRO_0000370146" description="8-amino-3,8-dideoxy-manno-octulosonate cytidylyltransferase">
    <location>
        <begin position="1"/>
        <end position="245"/>
    </location>
</feature>
<accession>A6WNW2</accession>
<proteinExistence type="inferred from homology"/>
<sequence length="245" mass="27477">MNVTLLIPARYGSSRFPGKPLAPINGKPMIQHVYERASLAKGLTNIYVATDDDRIKAAVEGFGGKVVMTSPEAASGTDRINDAINQLGLKDDDLVINLQGDQPLIDPTSIEQVISLFERHPGEFEMATLGFEIVNKTELDDPMHVKMVFDNNNYALYFSRSRIPFGRDTQDYPVYKHLGVYAYTRKFVQAFAALPLGRLEDLEKLEQLRALEYGHKIKIAISAFDSIEVDTPEDIRKCEQRLAVD</sequence>
<comment type="function">
    <text evidence="1">Activates KDO8N (a required 8-carbon sugar) for incorporation into bacterial lipopolysaccharide in the Shewanella genus.</text>
</comment>
<comment type="catalytic activity">
    <reaction evidence="1">
        <text>8-amino-3,8-dideoxy-alpha-D-manno-octulosonate + CTP = CMP-8-amino-3,8-dideoxy-alpha-D-manno-oct-2-ulosonate + diphosphate</text>
        <dbReference type="Rhea" id="RHEA:49284"/>
        <dbReference type="ChEBI" id="CHEBI:33019"/>
        <dbReference type="ChEBI" id="CHEBI:37563"/>
        <dbReference type="ChEBI" id="CHEBI:87091"/>
        <dbReference type="ChEBI" id="CHEBI:91089"/>
        <dbReference type="EC" id="2.7.7.90"/>
    </reaction>
</comment>
<comment type="pathway">
    <text evidence="1">Bacterial outer membrane biogenesis; lipopolysaccharide biosynthesis.</text>
</comment>
<comment type="subcellular location">
    <subcellularLocation>
        <location evidence="1">Cytoplasm</location>
    </subcellularLocation>
</comment>
<comment type="similarity">
    <text evidence="1">Belongs to the KdsB family.</text>
</comment>
<protein>
    <recommendedName>
        <fullName evidence="1">8-amino-3,8-dideoxy-manno-octulosonate cytidylyltransferase</fullName>
        <ecNumber evidence="1">2.7.7.90</ecNumber>
    </recommendedName>
    <alternativeName>
        <fullName evidence="1">CMP-8-amino-3,8-dideoxy-manno-octulosonate synthase</fullName>
    </alternativeName>
</protein>
<dbReference type="EC" id="2.7.7.90" evidence="1"/>
<dbReference type="EMBL" id="CP000753">
    <property type="protein sequence ID" value="ABS08501.1"/>
    <property type="molecule type" value="Genomic_DNA"/>
</dbReference>
<dbReference type="RefSeq" id="WP_012089331.1">
    <property type="nucleotide sequence ID" value="NC_009665.1"/>
</dbReference>
<dbReference type="SMR" id="A6WNW2"/>
<dbReference type="KEGG" id="sbm:Shew185_2363"/>
<dbReference type="HOGENOM" id="CLU_065038_0_1_6"/>
<dbReference type="UniPathway" id="UPA00030"/>
<dbReference type="GO" id="GO:0005829">
    <property type="term" value="C:cytosol"/>
    <property type="evidence" value="ECO:0007669"/>
    <property type="project" value="TreeGrafter"/>
</dbReference>
<dbReference type="GO" id="GO:0008690">
    <property type="term" value="F:3-deoxy-manno-octulosonate cytidylyltransferase activity"/>
    <property type="evidence" value="ECO:0007669"/>
    <property type="project" value="InterPro"/>
</dbReference>
<dbReference type="GO" id="GO:0009103">
    <property type="term" value="P:lipopolysaccharide biosynthetic process"/>
    <property type="evidence" value="ECO:0007669"/>
    <property type="project" value="UniProtKB-UniRule"/>
</dbReference>
<dbReference type="CDD" id="cd02517">
    <property type="entry name" value="CMP-KDO-Synthetase"/>
    <property type="match status" value="1"/>
</dbReference>
<dbReference type="FunFam" id="3.90.550.10:FF:000168">
    <property type="entry name" value="8-amino-3,8-dideoxy-manno-octulosonate cytidylyltransferase"/>
    <property type="match status" value="1"/>
</dbReference>
<dbReference type="Gene3D" id="3.90.550.10">
    <property type="entry name" value="Spore Coat Polysaccharide Biosynthesis Protein SpsA, Chain A"/>
    <property type="match status" value="1"/>
</dbReference>
<dbReference type="HAMAP" id="MF_00057">
    <property type="entry name" value="KdsB"/>
    <property type="match status" value="1"/>
</dbReference>
<dbReference type="InterPro" id="IPR003329">
    <property type="entry name" value="Cytidylyl_trans"/>
</dbReference>
<dbReference type="InterPro" id="IPR004528">
    <property type="entry name" value="KdsB"/>
</dbReference>
<dbReference type="InterPro" id="IPR029044">
    <property type="entry name" value="Nucleotide-diphossugar_trans"/>
</dbReference>
<dbReference type="NCBIfam" id="TIGR00466">
    <property type="entry name" value="kdsB"/>
    <property type="match status" value="1"/>
</dbReference>
<dbReference type="NCBIfam" id="NF003950">
    <property type="entry name" value="PRK05450.1-3"/>
    <property type="match status" value="1"/>
</dbReference>
<dbReference type="NCBIfam" id="NF003952">
    <property type="entry name" value="PRK05450.1-5"/>
    <property type="match status" value="1"/>
</dbReference>
<dbReference type="NCBIfam" id="NF009905">
    <property type="entry name" value="PRK13368.1"/>
    <property type="match status" value="1"/>
</dbReference>
<dbReference type="PANTHER" id="PTHR42866">
    <property type="entry name" value="3-DEOXY-MANNO-OCTULOSONATE CYTIDYLYLTRANSFERASE"/>
    <property type="match status" value="1"/>
</dbReference>
<dbReference type="PANTHER" id="PTHR42866:SF2">
    <property type="entry name" value="3-DEOXY-MANNO-OCTULOSONATE CYTIDYLYLTRANSFERASE, MITOCHONDRIAL"/>
    <property type="match status" value="1"/>
</dbReference>
<dbReference type="Pfam" id="PF02348">
    <property type="entry name" value="CTP_transf_3"/>
    <property type="match status" value="1"/>
</dbReference>
<dbReference type="SUPFAM" id="SSF53448">
    <property type="entry name" value="Nucleotide-diphospho-sugar transferases"/>
    <property type="match status" value="1"/>
</dbReference>